<reference key="1">
    <citation type="journal article" date="2008" name="PLoS Genet.">
        <title>Genomic islands in the pathogenic filamentous fungus Aspergillus fumigatus.</title>
        <authorList>
            <person name="Fedorova N.D."/>
            <person name="Khaldi N."/>
            <person name="Joardar V.S."/>
            <person name="Maiti R."/>
            <person name="Amedeo P."/>
            <person name="Anderson M.J."/>
            <person name="Crabtree J."/>
            <person name="Silva J.C."/>
            <person name="Badger J.H."/>
            <person name="Albarraq A."/>
            <person name="Angiuoli S."/>
            <person name="Bussey H."/>
            <person name="Bowyer P."/>
            <person name="Cotty P.J."/>
            <person name="Dyer P.S."/>
            <person name="Egan A."/>
            <person name="Galens K."/>
            <person name="Fraser-Liggett C.M."/>
            <person name="Haas B.J."/>
            <person name="Inman J.M."/>
            <person name="Kent R."/>
            <person name="Lemieux S."/>
            <person name="Malavazi I."/>
            <person name="Orvis J."/>
            <person name="Roemer T."/>
            <person name="Ronning C.M."/>
            <person name="Sundaram J.P."/>
            <person name="Sutton G."/>
            <person name="Turner G."/>
            <person name="Venter J.C."/>
            <person name="White O.R."/>
            <person name="Whitty B.R."/>
            <person name="Youngman P."/>
            <person name="Wolfe K.H."/>
            <person name="Goldman G.H."/>
            <person name="Wortman J.R."/>
            <person name="Jiang B."/>
            <person name="Denning D.W."/>
            <person name="Nierman W.C."/>
        </authorList>
    </citation>
    <scope>NUCLEOTIDE SEQUENCE [LARGE SCALE GENOMIC DNA]</scope>
    <source>
        <strain>CBS 144.89 / FGSC A1163 / CEA10</strain>
    </source>
</reference>
<comment type="function">
    <text evidence="1">Component of the eukaryotic translation initiation factor 3 (eIF-3) complex, which is involved in protein synthesis of a specialized repertoire of mRNAs and, together with other initiation factors, stimulates binding of mRNA and methionyl-tRNAi to the 40S ribosome. The eIF-3 complex specifically targets and initiates translation of a subset of mRNAs involved in cell proliferation.</text>
</comment>
<comment type="subunit">
    <text evidence="1">Component of the eukaryotic translation initiation factor 3 (eIF-3) complex.</text>
</comment>
<comment type="subcellular location">
    <subcellularLocation>
        <location evidence="1">Cytoplasm</location>
    </subcellularLocation>
</comment>
<comment type="similarity">
    <text evidence="1">Belongs to the eIF-3 subunit K family.</text>
</comment>
<comment type="sequence caution" evidence="3">
    <conflict type="erroneous initiation">
        <sequence resource="EMBL-CDS" id="EDP52815"/>
    </conflict>
</comment>
<evidence type="ECO:0000255" key="1">
    <source>
        <dbReference type="HAMAP-Rule" id="MF_03010"/>
    </source>
</evidence>
<evidence type="ECO:0000255" key="2">
    <source>
        <dbReference type="PROSITE-ProRule" id="PRU01185"/>
    </source>
</evidence>
<evidence type="ECO:0000305" key="3"/>
<organism>
    <name type="scientific">Aspergillus fumigatus (strain CBS 144.89 / FGSC A1163 / CEA10)</name>
    <name type="common">Neosartorya fumigata</name>
    <dbReference type="NCBI Taxonomy" id="451804"/>
    <lineage>
        <taxon>Eukaryota</taxon>
        <taxon>Fungi</taxon>
        <taxon>Dikarya</taxon>
        <taxon>Ascomycota</taxon>
        <taxon>Pezizomycotina</taxon>
        <taxon>Eurotiomycetes</taxon>
        <taxon>Eurotiomycetidae</taxon>
        <taxon>Eurotiales</taxon>
        <taxon>Aspergillaceae</taxon>
        <taxon>Aspergillus</taxon>
        <taxon>Aspergillus subgen. Fumigati</taxon>
    </lineage>
</organism>
<sequence length="249" mass="27972">MGVAFDKCDTRPAHIDAILNGLDRYNPETTTVFQDYVVQQCEERTFDCYANLALLKLYQFNPHLLQPETVTNILAKALTVFPSPAFSLCLALLPAHTQPFPTADTDASQTSDFVESIQKLARLSTLLESAQYAQFWSTLNSDDLYADLVADVAGFEELVRIRIAIEVGKAFREINAEVLEQWLDLRSREALEKFVTEVCSWEVDKTGPNGTVVKVPTNKENEARSEVKSERVGVEMFGRVIRRGFEQAA</sequence>
<protein>
    <recommendedName>
        <fullName evidence="1">Eukaryotic translation initiation factor 3 subunit K</fullName>
        <shortName evidence="1">eIF3k</shortName>
    </recommendedName>
    <alternativeName>
        <fullName evidence="1">eIF-3 p25</fullName>
    </alternativeName>
</protein>
<dbReference type="EMBL" id="DS499596">
    <property type="protein sequence ID" value="EDP52815.1"/>
    <property type="status" value="ALT_INIT"/>
    <property type="molecule type" value="Genomic_DNA"/>
</dbReference>
<dbReference type="SMR" id="B0XY69"/>
<dbReference type="OrthoDB" id="70271at5052"/>
<dbReference type="PhylomeDB" id="B0XY69"/>
<dbReference type="Proteomes" id="UP000001699">
    <property type="component" value="Unassembled WGS sequence"/>
</dbReference>
<dbReference type="GO" id="GO:0016282">
    <property type="term" value="C:eukaryotic 43S preinitiation complex"/>
    <property type="evidence" value="ECO:0007669"/>
    <property type="project" value="UniProtKB-UniRule"/>
</dbReference>
<dbReference type="GO" id="GO:0033290">
    <property type="term" value="C:eukaryotic 48S preinitiation complex"/>
    <property type="evidence" value="ECO:0007669"/>
    <property type="project" value="UniProtKB-UniRule"/>
</dbReference>
<dbReference type="GO" id="GO:0005852">
    <property type="term" value="C:eukaryotic translation initiation factor 3 complex"/>
    <property type="evidence" value="ECO:0007669"/>
    <property type="project" value="UniProtKB-UniRule"/>
</dbReference>
<dbReference type="GO" id="GO:0043022">
    <property type="term" value="F:ribosome binding"/>
    <property type="evidence" value="ECO:0007669"/>
    <property type="project" value="InterPro"/>
</dbReference>
<dbReference type="GO" id="GO:0003723">
    <property type="term" value="F:RNA binding"/>
    <property type="evidence" value="ECO:0007669"/>
    <property type="project" value="UniProtKB-UniRule"/>
</dbReference>
<dbReference type="GO" id="GO:0003743">
    <property type="term" value="F:translation initiation factor activity"/>
    <property type="evidence" value="ECO:0007669"/>
    <property type="project" value="UniProtKB-UniRule"/>
</dbReference>
<dbReference type="GO" id="GO:0001732">
    <property type="term" value="P:formation of cytoplasmic translation initiation complex"/>
    <property type="evidence" value="ECO:0007669"/>
    <property type="project" value="UniProtKB-UniRule"/>
</dbReference>
<dbReference type="GO" id="GO:0006446">
    <property type="term" value="P:regulation of translational initiation"/>
    <property type="evidence" value="ECO:0007669"/>
    <property type="project" value="InterPro"/>
</dbReference>
<dbReference type="FunFam" id="1.10.10.10:FF:000389">
    <property type="entry name" value="Eukaryotic translation initiation factor 3 subunit K"/>
    <property type="match status" value="1"/>
</dbReference>
<dbReference type="FunFam" id="1.25.40.250:FF:000003">
    <property type="entry name" value="Eukaryotic translation initiation factor 3 subunit K"/>
    <property type="match status" value="1"/>
</dbReference>
<dbReference type="Gene3D" id="1.25.40.250">
    <property type="entry name" value="ARM repeat, domain 1"/>
    <property type="match status" value="1"/>
</dbReference>
<dbReference type="Gene3D" id="1.10.10.10">
    <property type="entry name" value="Winged helix-like DNA-binding domain superfamily/Winged helix DNA-binding domain"/>
    <property type="match status" value="1"/>
</dbReference>
<dbReference type="HAMAP" id="MF_03010">
    <property type="entry name" value="eIF3k"/>
    <property type="match status" value="1"/>
</dbReference>
<dbReference type="InterPro" id="IPR016024">
    <property type="entry name" value="ARM-type_fold"/>
</dbReference>
<dbReference type="InterPro" id="IPR033464">
    <property type="entry name" value="CSN8_PSD8_EIF3K"/>
</dbReference>
<dbReference type="InterPro" id="IPR009374">
    <property type="entry name" value="eIF3k"/>
</dbReference>
<dbReference type="InterPro" id="IPR000717">
    <property type="entry name" value="PCI_dom"/>
</dbReference>
<dbReference type="InterPro" id="IPR016020">
    <property type="entry name" value="Transl_init_fac_sub12_N_euk"/>
</dbReference>
<dbReference type="InterPro" id="IPR036388">
    <property type="entry name" value="WH-like_DNA-bd_sf"/>
</dbReference>
<dbReference type="InterPro" id="IPR036390">
    <property type="entry name" value="WH_DNA-bd_sf"/>
</dbReference>
<dbReference type="PANTHER" id="PTHR13022">
    <property type="entry name" value="EUKARYOTIC TRANSLATION INITIATION FACTOR 3 SUBUNIT 11"/>
    <property type="match status" value="1"/>
</dbReference>
<dbReference type="PANTHER" id="PTHR13022:SF0">
    <property type="entry name" value="EUKARYOTIC TRANSLATION INITIATION FACTOR 3 SUBUNIT K"/>
    <property type="match status" value="1"/>
</dbReference>
<dbReference type="Pfam" id="PF10075">
    <property type="entry name" value="CSN8_PSD8_EIF3K"/>
    <property type="match status" value="1"/>
</dbReference>
<dbReference type="SUPFAM" id="SSF48371">
    <property type="entry name" value="ARM repeat"/>
    <property type="match status" value="1"/>
</dbReference>
<dbReference type="SUPFAM" id="SSF46785">
    <property type="entry name" value="Winged helix' DNA-binding domain"/>
    <property type="match status" value="1"/>
</dbReference>
<dbReference type="PROSITE" id="PS50250">
    <property type="entry name" value="PCI"/>
    <property type="match status" value="1"/>
</dbReference>
<name>EIF3K_ASPFC</name>
<keyword id="KW-0963">Cytoplasm</keyword>
<keyword id="KW-0396">Initiation factor</keyword>
<keyword id="KW-0648">Protein biosynthesis</keyword>
<accession>B0XY69</accession>
<proteinExistence type="inferred from homology"/>
<gene>
    <name type="ORF">AFUB_039840</name>
</gene>
<feature type="chain" id="PRO_0000365052" description="Eukaryotic translation initiation factor 3 subunit K">
    <location>
        <begin position="1"/>
        <end position="249"/>
    </location>
</feature>
<feature type="domain" description="PCI" evidence="2">
    <location>
        <begin position="46"/>
        <end position="222"/>
    </location>
</feature>